<gene>
    <name evidence="3" type="primary">doeD</name>
    <name type="ordered locus">HELO_3661</name>
</gene>
<reference key="1">
    <citation type="journal article" date="2011" name="Environ. Microbiol.">
        <title>A blueprint of ectoine metabolism from the genome of the industrial producer Halomonas elongata DSM 2581(T).</title>
        <authorList>
            <person name="Schwibbert K."/>
            <person name="Marin-Sanguino A."/>
            <person name="Bagyan I."/>
            <person name="Heidrich G."/>
            <person name="Lentzen G."/>
            <person name="Seitz H."/>
            <person name="Rampp M."/>
            <person name="Schuster S.C."/>
            <person name="Klenk H.P."/>
            <person name="Pfeiffer F."/>
            <person name="Oesterhelt D."/>
            <person name="Kunte H.J."/>
        </authorList>
    </citation>
    <scope>NUCLEOTIDE SEQUENCE [LARGE SCALE GENOMIC DNA]</scope>
    <scope>FUNCTION</scope>
    <scope>DISRUPTION PHENOTYPE</scope>
    <source>
        <strain>ATCC 33173 / DSM 2581 / NBRC 15536 / NCIMB 2198 / 1H9</strain>
    </source>
</reference>
<proteinExistence type="inferred from homology"/>
<sequence length="469" mass="50881">MTTHKDLIDRDRKVTFHASTHLRDFAHGDAPGRVITGGKGIKIVDKDGREFIDGFAGLYCVNIGYGRSEVAEAIYQQALEMSYYHTYVGHSNEPQIALSEKILELAGPGMSKVYYGMSGSDANETQLKIVRYYNNVLGRPQKKKVISRMRGYHGSGIASGSLTGLKAFHDHFDLPIETIRHTEAPYYYHRAAEQEGMTEREFSKHCAAKLEEMILAEGPDTVAAFIGEPVLGTGGIVPPPEGYWDEIQAVLTKYDVLLIADEVVCGFGRTGSDFGSHHYGIKPDLITIAKGLTSAYQPLSGVIVGDRVWEVLEQGTGEYGPIGHGWTYSGHALGCAAGLANLAIIEREGLTANAAETGAYLQERMKAAFADHPVVGQVRGVGMMAALEFSVDPAARRHFDPSLKVGPRMSAAALEEDLIARAMPQGDILGFAPPLTTTREEVDEIVARTERAVNKVTDALTREGAIQAA</sequence>
<protein>
    <recommendedName>
        <fullName>Diaminobutyrate--2-oxoglutarate transaminase</fullName>
        <ecNumber evidence="5">2.6.1.76</ecNumber>
    </recommendedName>
    <alternativeName>
        <fullName evidence="3">Diaminobutyric acid transaminase</fullName>
    </alternativeName>
</protein>
<dbReference type="EC" id="2.6.1.76" evidence="5"/>
<dbReference type="EMBL" id="FN869568">
    <property type="protein sequence ID" value="CBV43545.1"/>
    <property type="molecule type" value="Genomic_DNA"/>
</dbReference>
<dbReference type="RefSeq" id="WP_013333417.1">
    <property type="nucleotide sequence ID" value="NC_014532.2"/>
</dbReference>
<dbReference type="SMR" id="E1V7V7"/>
<dbReference type="STRING" id="768066.HELO_3661"/>
<dbReference type="GeneID" id="91011059"/>
<dbReference type="KEGG" id="hel:HELO_3661"/>
<dbReference type="eggNOG" id="COG0161">
    <property type="taxonomic scope" value="Bacteria"/>
</dbReference>
<dbReference type="HOGENOM" id="CLU_016922_4_1_6"/>
<dbReference type="OrthoDB" id="7052035at2"/>
<dbReference type="BioCyc" id="MetaCyc:MONOMER-20120"/>
<dbReference type="Proteomes" id="UP000008707">
    <property type="component" value="Chromosome"/>
</dbReference>
<dbReference type="GO" id="GO:0005829">
    <property type="term" value="C:cytosol"/>
    <property type="evidence" value="ECO:0007669"/>
    <property type="project" value="TreeGrafter"/>
</dbReference>
<dbReference type="GO" id="GO:0045303">
    <property type="term" value="F:diaminobutyrate-2-oxoglutarate transaminase activity"/>
    <property type="evidence" value="ECO:0000314"/>
    <property type="project" value="UniProtKB"/>
</dbReference>
<dbReference type="GO" id="GO:0030170">
    <property type="term" value="F:pyridoxal phosphate binding"/>
    <property type="evidence" value="ECO:0007669"/>
    <property type="project" value="InterPro"/>
</dbReference>
<dbReference type="GO" id="GO:0042400">
    <property type="term" value="P:ectoine catabolic process"/>
    <property type="evidence" value="ECO:0000315"/>
    <property type="project" value="UniProtKB"/>
</dbReference>
<dbReference type="CDD" id="cd00610">
    <property type="entry name" value="OAT_like"/>
    <property type="match status" value="1"/>
</dbReference>
<dbReference type="FunFam" id="3.40.640.10:FF:000014">
    <property type="entry name" value="Adenosylmethionine-8-amino-7-oxononanoate aminotransferase, probable"/>
    <property type="match status" value="1"/>
</dbReference>
<dbReference type="Gene3D" id="3.90.1150.10">
    <property type="entry name" value="Aspartate Aminotransferase, domain 1"/>
    <property type="match status" value="1"/>
</dbReference>
<dbReference type="Gene3D" id="3.40.640.10">
    <property type="entry name" value="Type I PLP-dependent aspartate aminotransferase-like (Major domain)"/>
    <property type="match status" value="1"/>
</dbReference>
<dbReference type="InterPro" id="IPR005814">
    <property type="entry name" value="Aminotrans_3"/>
</dbReference>
<dbReference type="InterPro" id="IPR049704">
    <property type="entry name" value="Aminotrans_3_PPA_site"/>
</dbReference>
<dbReference type="InterPro" id="IPR015424">
    <property type="entry name" value="PyrdxlP-dep_Trfase"/>
</dbReference>
<dbReference type="InterPro" id="IPR015421">
    <property type="entry name" value="PyrdxlP-dep_Trfase_major"/>
</dbReference>
<dbReference type="InterPro" id="IPR015422">
    <property type="entry name" value="PyrdxlP-dep_Trfase_small"/>
</dbReference>
<dbReference type="NCBIfam" id="NF004767">
    <property type="entry name" value="PRK06105.1"/>
    <property type="match status" value="1"/>
</dbReference>
<dbReference type="NCBIfam" id="NF005684">
    <property type="entry name" value="PRK07482.1"/>
    <property type="match status" value="1"/>
</dbReference>
<dbReference type="PANTHER" id="PTHR43094">
    <property type="entry name" value="AMINOTRANSFERASE"/>
    <property type="match status" value="1"/>
</dbReference>
<dbReference type="PANTHER" id="PTHR43094:SF1">
    <property type="entry name" value="AMINOTRANSFERASE CLASS-III"/>
    <property type="match status" value="1"/>
</dbReference>
<dbReference type="Pfam" id="PF00202">
    <property type="entry name" value="Aminotran_3"/>
    <property type="match status" value="1"/>
</dbReference>
<dbReference type="SUPFAM" id="SSF53383">
    <property type="entry name" value="PLP-dependent transferases"/>
    <property type="match status" value="1"/>
</dbReference>
<dbReference type="PROSITE" id="PS00600">
    <property type="entry name" value="AA_TRANSFER_CLASS_3"/>
    <property type="match status" value="1"/>
</dbReference>
<name>DOED_HALED</name>
<accession>E1V7V7</accession>
<comment type="function">
    <text evidence="2">Involved in the degradation of ectoine, which allows H.elongata to utilize ectoine as both a carbon and a nitrogen source for growth. Probably catalyzes the conversion of L-2,4-diaminobutyrate (DABA) to L-aspartate beta-semialdehyde (ASA) by transamination with 2-oxoglutarate.</text>
</comment>
<comment type="catalytic activity">
    <reaction evidence="5">
        <text>L-2,4-diaminobutanoate + 2-oxoglutarate = L-aspartate 4-semialdehyde + L-glutamate</text>
        <dbReference type="Rhea" id="RHEA:11160"/>
        <dbReference type="ChEBI" id="CHEBI:16810"/>
        <dbReference type="ChEBI" id="CHEBI:29985"/>
        <dbReference type="ChEBI" id="CHEBI:58761"/>
        <dbReference type="ChEBI" id="CHEBI:537519"/>
        <dbReference type="EC" id="2.6.1.76"/>
    </reaction>
    <physiologicalReaction direction="left-to-right" evidence="5">
        <dbReference type="Rhea" id="RHEA:11161"/>
    </physiologicalReaction>
</comment>
<comment type="cofactor">
    <cofactor evidence="1">
        <name>pyridoxal 5'-phosphate</name>
        <dbReference type="ChEBI" id="CHEBI:597326"/>
    </cofactor>
</comment>
<comment type="subcellular location">
    <subcellularLocation>
        <location evidence="1">Cytoplasm</location>
    </subcellularLocation>
</comment>
<comment type="disruption phenotype">
    <text evidence="2">Deletion mutant is impaired in growth on ectoine as a sole carbon source.</text>
</comment>
<comment type="miscellaneous">
    <text evidence="5">DoeD and EctB both catalyze the same transamination reaction between L-aspartate 4-semialdehyde and L-2,4-diaminobutanoate coupled to the 2-oxoglutarate/L-glutamate pair. This reversible reaction is part of both, ectoine biosynthesis and ectoine degradation.</text>
</comment>
<comment type="similarity">
    <text evidence="4">Belongs to the class-III pyridoxal-phosphate-dependent aminotransferase family.</text>
</comment>
<feature type="chain" id="PRO_0000428759" description="Diaminobutyrate--2-oxoglutarate transaminase">
    <location>
        <begin position="1"/>
        <end position="469"/>
    </location>
</feature>
<feature type="modified residue" description="N6-(pyridoxal phosphate)lysine" evidence="1">
    <location>
        <position position="290"/>
    </location>
</feature>
<organism>
    <name type="scientific">Halomonas elongata (strain ATCC 33173 / DSM 2581 / NBRC 15536 / NCIMB 2198 / 1H9)</name>
    <dbReference type="NCBI Taxonomy" id="768066"/>
    <lineage>
        <taxon>Bacteria</taxon>
        <taxon>Pseudomonadati</taxon>
        <taxon>Pseudomonadota</taxon>
        <taxon>Gammaproteobacteria</taxon>
        <taxon>Oceanospirillales</taxon>
        <taxon>Halomonadaceae</taxon>
        <taxon>Halomonas</taxon>
    </lineage>
</organism>
<keyword id="KW-0032">Aminotransferase</keyword>
<keyword id="KW-0963">Cytoplasm</keyword>
<keyword id="KW-0663">Pyridoxal phosphate</keyword>
<keyword id="KW-0808">Transferase</keyword>
<evidence type="ECO:0000250" key="1"/>
<evidence type="ECO:0000269" key="2">
    <source>
    </source>
</evidence>
<evidence type="ECO:0000303" key="3">
    <source>
    </source>
</evidence>
<evidence type="ECO:0000305" key="4"/>
<evidence type="ECO:0000305" key="5">
    <source>
    </source>
</evidence>